<name>SECM_PHOLL</name>
<evidence type="ECO:0000255" key="1">
    <source>
        <dbReference type="HAMAP-Rule" id="MF_01332"/>
    </source>
</evidence>
<sequence>MGILNLWRQFGRRYFWSHLLLGVVAASIGAPTILAGVTDNISQANTSPSQSWQNQALSAFDNLFSLQNVQHQPANGVNYWQQHAVRNVIRQLSFAFSISQPMSDETAKQSIRLSSSNIQQLVLETLNTLLIREPKPPEPVLDIPFLNVASQSSYILTLWIAKAQGIRAGPTAYL</sequence>
<gene>
    <name evidence="1" type="primary">secM</name>
    <name type="ordered locus">plu3646</name>
</gene>
<feature type="signal peptide" evidence="1">
    <location>
        <begin position="1"/>
        <end position="35"/>
    </location>
</feature>
<feature type="chain" id="PRO_0000042108" description="Secretion monitor">
    <location>
        <begin position="36"/>
        <end position="174"/>
    </location>
</feature>
<dbReference type="EMBL" id="BX571871">
    <property type="protein sequence ID" value="CAE16019.1"/>
    <property type="molecule type" value="Genomic_DNA"/>
</dbReference>
<dbReference type="RefSeq" id="WP_011147809.1">
    <property type="nucleotide sequence ID" value="NC_005126.1"/>
</dbReference>
<dbReference type="STRING" id="243265.plu3646"/>
<dbReference type="GeneID" id="48849889"/>
<dbReference type="KEGG" id="plu:plu3646"/>
<dbReference type="eggNOG" id="ENOG5031JGK">
    <property type="taxonomic scope" value="Bacteria"/>
</dbReference>
<dbReference type="HOGENOM" id="CLU_108853_0_0_6"/>
<dbReference type="OrthoDB" id="6495450at2"/>
<dbReference type="Proteomes" id="UP000002514">
    <property type="component" value="Chromosome"/>
</dbReference>
<dbReference type="GO" id="GO:0005829">
    <property type="term" value="C:cytosol"/>
    <property type="evidence" value="ECO:0007669"/>
    <property type="project" value="UniProtKB-SubCell"/>
</dbReference>
<dbReference type="GO" id="GO:0042597">
    <property type="term" value="C:periplasmic space"/>
    <property type="evidence" value="ECO:0007669"/>
    <property type="project" value="UniProtKB-SubCell"/>
</dbReference>
<dbReference type="GO" id="GO:0045182">
    <property type="term" value="F:translation regulator activity"/>
    <property type="evidence" value="ECO:0007669"/>
    <property type="project" value="InterPro"/>
</dbReference>
<dbReference type="HAMAP" id="MF_01332">
    <property type="entry name" value="SecM"/>
    <property type="match status" value="1"/>
</dbReference>
<dbReference type="InterPro" id="IPR009502">
    <property type="entry name" value="SecM"/>
</dbReference>
<dbReference type="NCBIfam" id="NF002799">
    <property type="entry name" value="PRK02943.1-1"/>
    <property type="match status" value="1"/>
</dbReference>
<dbReference type="Pfam" id="PF06558">
    <property type="entry name" value="SecM"/>
    <property type="match status" value="1"/>
</dbReference>
<dbReference type="PIRSF" id="PIRSF004572">
    <property type="entry name" value="SecM"/>
    <property type="match status" value="1"/>
</dbReference>
<organism>
    <name type="scientific">Photorhabdus laumondii subsp. laumondii (strain DSM 15139 / CIP 105565 / TT01)</name>
    <name type="common">Photorhabdus luminescens subsp. laumondii</name>
    <dbReference type="NCBI Taxonomy" id="243265"/>
    <lineage>
        <taxon>Bacteria</taxon>
        <taxon>Pseudomonadati</taxon>
        <taxon>Pseudomonadota</taxon>
        <taxon>Gammaproteobacteria</taxon>
        <taxon>Enterobacterales</taxon>
        <taxon>Morganellaceae</taxon>
        <taxon>Photorhabdus</taxon>
    </lineage>
</organism>
<comment type="function">
    <text evidence="1">Regulates secA expression by translational coupling of the secM secA operon. Translational pausing at a specific Pro residue 5 residues before the end of the protein may allow disruption of a mRNA repressor helix that normally suppresses secA translation initiation.</text>
</comment>
<comment type="subcellular location">
    <subcellularLocation>
        <location evidence="1">Cytoplasm</location>
        <location evidence="1">Cytosol</location>
    </subcellularLocation>
    <subcellularLocation>
        <location evidence="1">Periplasm</location>
    </subcellularLocation>
    <text evidence="1">The active form is cytosolic, while the periplasmic form is rapidly degraded, mainly by the tail-specific protease.</text>
</comment>
<comment type="similarity">
    <text evidence="1">Belongs to the SecM family.</text>
</comment>
<accession>Q7N155</accession>
<protein>
    <recommendedName>
        <fullName evidence="1">Secretion monitor</fullName>
    </recommendedName>
</protein>
<proteinExistence type="inferred from homology"/>
<keyword id="KW-0963">Cytoplasm</keyword>
<keyword id="KW-0574">Periplasm</keyword>
<keyword id="KW-1185">Reference proteome</keyword>
<keyword id="KW-0732">Signal</keyword>
<reference key="1">
    <citation type="journal article" date="2003" name="Nat. Biotechnol.">
        <title>The genome sequence of the entomopathogenic bacterium Photorhabdus luminescens.</title>
        <authorList>
            <person name="Duchaud E."/>
            <person name="Rusniok C."/>
            <person name="Frangeul L."/>
            <person name="Buchrieser C."/>
            <person name="Givaudan A."/>
            <person name="Taourit S."/>
            <person name="Bocs S."/>
            <person name="Boursaux-Eude C."/>
            <person name="Chandler M."/>
            <person name="Charles J.-F."/>
            <person name="Dassa E."/>
            <person name="Derose R."/>
            <person name="Derzelle S."/>
            <person name="Freyssinet G."/>
            <person name="Gaudriault S."/>
            <person name="Medigue C."/>
            <person name="Lanois A."/>
            <person name="Powell K."/>
            <person name="Siguier P."/>
            <person name="Vincent R."/>
            <person name="Wingate V."/>
            <person name="Zouine M."/>
            <person name="Glaser P."/>
            <person name="Boemare N."/>
            <person name="Danchin A."/>
            <person name="Kunst F."/>
        </authorList>
    </citation>
    <scope>NUCLEOTIDE SEQUENCE [LARGE SCALE GENOMIC DNA]</scope>
    <source>
        <strain>DSM 15139 / CIP 105565 / TT01</strain>
    </source>
</reference>